<feature type="chain" id="PRO_0000260273" description="Globin">
    <location>
        <begin position="1"/>
        <end position="157"/>
    </location>
</feature>
<feature type="domain" description="Globin" evidence="1">
    <location>
        <begin position="8"/>
        <end position="155"/>
    </location>
</feature>
<feature type="binding site" description="distal binding residue" evidence="1">
    <location>
        <position position="70"/>
    </location>
    <ligand>
        <name>heme b</name>
        <dbReference type="ChEBI" id="CHEBI:60344"/>
    </ligand>
    <ligandPart>
        <name>Fe</name>
        <dbReference type="ChEBI" id="CHEBI:18248"/>
    </ligandPart>
</feature>
<feature type="binding site" description="proximal binding residue" evidence="1">
    <location>
        <position position="102"/>
    </location>
    <ligand>
        <name>heme b</name>
        <dbReference type="ChEBI" id="CHEBI:60344"/>
    </ligand>
    <ligandPart>
        <name>Fe</name>
        <dbReference type="ChEBI" id="CHEBI:18248"/>
    </ligandPart>
</feature>
<feature type="modified residue" description="N-acetylglycine" evidence="2">
    <location>
        <position position="1"/>
    </location>
</feature>
<keyword id="KW-0007">Acetylation</keyword>
<keyword id="KW-0903">Direct protein sequencing</keyword>
<keyword id="KW-0349">Heme</keyword>
<keyword id="KW-0408">Iron</keyword>
<keyword id="KW-0479">Metal-binding</keyword>
<keyword id="KW-0514">Muscle protein</keyword>
<keyword id="KW-0561">Oxygen transport</keyword>
<keyword id="KW-0813">Transport</keyword>
<protein>
    <recommendedName>
        <fullName>Globin</fullName>
    </recommendedName>
    <alternativeName>
        <fullName>Myoglobin</fullName>
    </alternativeName>
</protein>
<evidence type="ECO:0000255" key="1">
    <source>
        <dbReference type="PROSITE-ProRule" id="PRU00238"/>
    </source>
</evidence>
<evidence type="ECO:0000269" key="2">
    <source>
    </source>
</evidence>
<comment type="subunit">
    <text>Monomer.</text>
</comment>
<comment type="similarity">
    <text evidence="1">Belongs to the globin family.</text>
</comment>
<sequence>GDVDVLKSLSADQKAAIKSSWAAFAADITGNGSNVLVQFFKDYPGDQSYFKKFDGKKPDELKGDAQLATHASQVFGSLNNMIDSMDDPDKMVGLLCKNASDHIPRGVRQQQYKELFSTLMNYMQSLPGANVAGDTKAAWDKALNAMANIIDAEQKRL</sequence>
<organism>
    <name type="scientific">Nerita albicilla</name>
    <name type="common">Ox-palate nerite</name>
    <name type="synonym">Theliostyla albicilla</name>
    <dbReference type="NCBI Taxonomy" id="52928"/>
    <lineage>
        <taxon>Eukaryota</taxon>
        <taxon>Metazoa</taxon>
        <taxon>Spiralia</taxon>
        <taxon>Lophotrochozoa</taxon>
        <taxon>Mollusca</taxon>
        <taxon>Gastropoda</taxon>
        <taxon>Neritimorpha</taxon>
        <taxon>Cycloneritida</taxon>
        <taxon>Neritoidea</taxon>
        <taxon>Neritidae</taxon>
        <taxon>Nerita</taxon>
    </lineage>
</organism>
<dbReference type="SMR" id="P0C227"/>
<dbReference type="iPTMnet" id="P0C227"/>
<dbReference type="GO" id="GO:0005576">
    <property type="term" value="C:extracellular region"/>
    <property type="evidence" value="ECO:0007669"/>
    <property type="project" value="InterPro"/>
</dbReference>
<dbReference type="GO" id="GO:0005833">
    <property type="term" value="C:hemoglobin complex"/>
    <property type="evidence" value="ECO:0007669"/>
    <property type="project" value="InterPro"/>
</dbReference>
<dbReference type="GO" id="GO:0020037">
    <property type="term" value="F:heme binding"/>
    <property type="evidence" value="ECO:0007669"/>
    <property type="project" value="InterPro"/>
</dbReference>
<dbReference type="GO" id="GO:0046872">
    <property type="term" value="F:metal ion binding"/>
    <property type="evidence" value="ECO:0007669"/>
    <property type="project" value="UniProtKB-KW"/>
</dbReference>
<dbReference type="GO" id="GO:0019825">
    <property type="term" value="F:oxygen binding"/>
    <property type="evidence" value="ECO:0007669"/>
    <property type="project" value="InterPro"/>
</dbReference>
<dbReference type="GO" id="GO:0005344">
    <property type="term" value="F:oxygen carrier activity"/>
    <property type="evidence" value="ECO:0007669"/>
    <property type="project" value="UniProtKB-KW"/>
</dbReference>
<dbReference type="CDD" id="cd01040">
    <property type="entry name" value="Mb-like"/>
    <property type="match status" value="1"/>
</dbReference>
<dbReference type="Gene3D" id="1.10.490.10">
    <property type="entry name" value="Globins"/>
    <property type="match status" value="1"/>
</dbReference>
<dbReference type="InterPro" id="IPR002336">
    <property type="entry name" value="Erythrocruorin"/>
</dbReference>
<dbReference type="InterPro" id="IPR000971">
    <property type="entry name" value="Globin"/>
</dbReference>
<dbReference type="InterPro" id="IPR009050">
    <property type="entry name" value="Globin-like_sf"/>
</dbReference>
<dbReference type="InterPro" id="IPR012292">
    <property type="entry name" value="Globin/Proto"/>
</dbReference>
<dbReference type="InterPro" id="IPR044399">
    <property type="entry name" value="Mb-like_M"/>
</dbReference>
<dbReference type="PANTHER" id="PTHR47217">
    <property type="entry name" value="GLOBIN-LIKE PROTEIN"/>
    <property type="match status" value="1"/>
</dbReference>
<dbReference type="PANTHER" id="PTHR47217:SF1">
    <property type="entry name" value="GLOBIN-LIKE PROTEIN"/>
    <property type="match status" value="1"/>
</dbReference>
<dbReference type="Pfam" id="PF00042">
    <property type="entry name" value="Globin"/>
    <property type="match status" value="1"/>
</dbReference>
<dbReference type="PRINTS" id="PR00611">
    <property type="entry name" value="ERYTHCRUORIN"/>
</dbReference>
<dbReference type="SUPFAM" id="SSF46458">
    <property type="entry name" value="Globin-like"/>
    <property type="match status" value="1"/>
</dbReference>
<dbReference type="PROSITE" id="PS01033">
    <property type="entry name" value="GLOBIN"/>
    <property type="match status" value="1"/>
</dbReference>
<accession>P0C227</accession>
<proteinExistence type="evidence at protein level"/>
<reference key="1">
    <citation type="journal article" date="2003" name="Int. J. Biochem. Cell Biol.">
        <title>Evidence of met-form myoglobin from Theliostyla albicilla radular muscle.</title>
        <authorList>
            <person name="Suzuki T."/>
            <person name="Takao H."/>
            <person name="Yamanaka K."/>
            <person name="Gotoh H."/>
            <person name="Furukohri T."/>
            <person name="Takagi T."/>
        </authorList>
    </citation>
    <scope>PROTEIN SEQUENCE</scope>
    <scope>ACETYLATION AT GLY-1</scope>
    <source>
        <tissue>Muscle</tissue>
    </source>
</reference>
<name>GLB_NERAL</name>